<evidence type="ECO:0000255" key="1">
    <source>
        <dbReference type="HAMAP-Rule" id="MF_00109"/>
    </source>
</evidence>
<keyword id="KW-0028">Amino-acid biosynthesis</keyword>
<keyword id="KW-0057">Aromatic amino acid biosynthesis</keyword>
<keyword id="KW-0067">ATP-binding</keyword>
<keyword id="KW-0963">Cytoplasm</keyword>
<keyword id="KW-0418">Kinase</keyword>
<keyword id="KW-0460">Magnesium</keyword>
<keyword id="KW-0479">Metal-binding</keyword>
<keyword id="KW-0547">Nucleotide-binding</keyword>
<keyword id="KW-1185">Reference proteome</keyword>
<keyword id="KW-0808">Transferase</keyword>
<comment type="function">
    <text evidence="1">Catalyzes the specific phosphorylation of the 3-hydroxyl group of shikimic acid using ATP as a cosubstrate.</text>
</comment>
<comment type="catalytic activity">
    <reaction evidence="1">
        <text>shikimate + ATP = 3-phosphoshikimate + ADP + H(+)</text>
        <dbReference type="Rhea" id="RHEA:13121"/>
        <dbReference type="ChEBI" id="CHEBI:15378"/>
        <dbReference type="ChEBI" id="CHEBI:30616"/>
        <dbReference type="ChEBI" id="CHEBI:36208"/>
        <dbReference type="ChEBI" id="CHEBI:145989"/>
        <dbReference type="ChEBI" id="CHEBI:456216"/>
        <dbReference type="EC" id="2.7.1.71"/>
    </reaction>
</comment>
<comment type="cofactor">
    <cofactor evidence="1">
        <name>Mg(2+)</name>
        <dbReference type="ChEBI" id="CHEBI:18420"/>
    </cofactor>
    <text evidence="1">Binds 1 Mg(2+) ion per subunit.</text>
</comment>
<comment type="pathway">
    <text evidence="1">Metabolic intermediate biosynthesis; chorismate biosynthesis; chorismate from D-erythrose 4-phosphate and phosphoenolpyruvate: step 5/7.</text>
</comment>
<comment type="subunit">
    <text evidence="1">Monomer.</text>
</comment>
<comment type="subcellular location">
    <subcellularLocation>
        <location evidence="1">Cytoplasm</location>
    </subcellularLocation>
</comment>
<comment type="similarity">
    <text evidence="1">Belongs to the shikimate kinase family.</text>
</comment>
<name>AROK_STRMK</name>
<gene>
    <name evidence="1" type="primary">aroK</name>
    <name type="ordered locus">Smlt3619</name>
</gene>
<dbReference type="EC" id="2.7.1.71" evidence="1"/>
<dbReference type="EMBL" id="AM743169">
    <property type="protein sequence ID" value="CAQ47036.1"/>
    <property type="molecule type" value="Genomic_DNA"/>
</dbReference>
<dbReference type="RefSeq" id="WP_012481014.1">
    <property type="nucleotide sequence ID" value="NC_010943.1"/>
</dbReference>
<dbReference type="SMR" id="B2FQI7"/>
<dbReference type="EnsemblBacteria" id="CAQ47036">
    <property type="protein sequence ID" value="CAQ47036"/>
    <property type="gene ID" value="Smlt3619"/>
</dbReference>
<dbReference type="KEGG" id="sml:Smlt3619"/>
<dbReference type="PATRIC" id="fig|522373.3.peg.3399"/>
<dbReference type="eggNOG" id="COG0703">
    <property type="taxonomic scope" value="Bacteria"/>
</dbReference>
<dbReference type="HOGENOM" id="CLU_057607_3_2_6"/>
<dbReference type="UniPathway" id="UPA00053">
    <property type="reaction ID" value="UER00088"/>
</dbReference>
<dbReference type="Proteomes" id="UP000008840">
    <property type="component" value="Chromosome"/>
</dbReference>
<dbReference type="GO" id="GO:0005829">
    <property type="term" value="C:cytosol"/>
    <property type="evidence" value="ECO:0007669"/>
    <property type="project" value="TreeGrafter"/>
</dbReference>
<dbReference type="GO" id="GO:0005524">
    <property type="term" value="F:ATP binding"/>
    <property type="evidence" value="ECO:0007669"/>
    <property type="project" value="UniProtKB-UniRule"/>
</dbReference>
<dbReference type="GO" id="GO:0000287">
    <property type="term" value="F:magnesium ion binding"/>
    <property type="evidence" value="ECO:0007669"/>
    <property type="project" value="UniProtKB-UniRule"/>
</dbReference>
<dbReference type="GO" id="GO:0004765">
    <property type="term" value="F:shikimate kinase activity"/>
    <property type="evidence" value="ECO:0007669"/>
    <property type="project" value="UniProtKB-UniRule"/>
</dbReference>
<dbReference type="GO" id="GO:0008652">
    <property type="term" value="P:amino acid biosynthetic process"/>
    <property type="evidence" value="ECO:0007669"/>
    <property type="project" value="UniProtKB-KW"/>
</dbReference>
<dbReference type="GO" id="GO:0009073">
    <property type="term" value="P:aromatic amino acid family biosynthetic process"/>
    <property type="evidence" value="ECO:0007669"/>
    <property type="project" value="UniProtKB-KW"/>
</dbReference>
<dbReference type="GO" id="GO:0009423">
    <property type="term" value="P:chorismate biosynthetic process"/>
    <property type="evidence" value="ECO:0007669"/>
    <property type="project" value="UniProtKB-UniRule"/>
</dbReference>
<dbReference type="CDD" id="cd00464">
    <property type="entry name" value="SK"/>
    <property type="match status" value="1"/>
</dbReference>
<dbReference type="Gene3D" id="3.40.50.300">
    <property type="entry name" value="P-loop containing nucleotide triphosphate hydrolases"/>
    <property type="match status" value="1"/>
</dbReference>
<dbReference type="HAMAP" id="MF_00109">
    <property type="entry name" value="Shikimate_kinase"/>
    <property type="match status" value="1"/>
</dbReference>
<dbReference type="InterPro" id="IPR027417">
    <property type="entry name" value="P-loop_NTPase"/>
</dbReference>
<dbReference type="InterPro" id="IPR031322">
    <property type="entry name" value="Shikimate/glucono_kinase"/>
</dbReference>
<dbReference type="InterPro" id="IPR000623">
    <property type="entry name" value="Shikimate_kinase/TSH1"/>
</dbReference>
<dbReference type="InterPro" id="IPR023000">
    <property type="entry name" value="Shikimate_kinase_CS"/>
</dbReference>
<dbReference type="PANTHER" id="PTHR21087">
    <property type="entry name" value="SHIKIMATE KINASE"/>
    <property type="match status" value="1"/>
</dbReference>
<dbReference type="PANTHER" id="PTHR21087:SF16">
    <property type="entry name" value="SHIKIMATE KINASE 1, CHLOROPLASTIC"/>
    <property type="match status" value="1"/>
</dbReference>
<dbReference type="Pfam" id="PF01202">
    <property type="entry name" value="SKI"/>
    <property type="match status" value="1"/>
</dbReference>
<dbReference type="PRINTS" id="PR01100">
    <property type="entry name" value="SHIKIMTKNASE"/>
</dbReference>
<dbReference type="SUPFAM" id="SSF52540">
    <property type="entry name" value="P-loop containing nucleoside triphosphate hydrolases"/>
    <property type="match status" value="1"/>
</dbReference>
<dbReference type="PROSITE" id="PS01128">
    <property type="entry name" value="SHIKIMATE_KINASE"/>
    <property type="match status" value="1"/>
</dbReference>
<organism>
    <name type="scientific">Stenotrophomonas maltophilia (strain K279a)</name>
    <dbReference type="NCBI Taxonomy" id="522373"/>
    <lineage>
        <taxon>Bacteria</taxon>
        <taxon>Pseudomonadati</taxon>
        <taxon>Pseudomonadota</taxon>
        <taxon>Gammaproteobacteria</taxon>
        <taxon>Lysobacterales</taxon>
        <taxon>Lysobacteraceae</taxon>
        <taxon>Stenotrophomonas</taxon>
        <taxon>Stenotrophomonas maltophilia group</taxon>
    </lineage>
</organism>
<feature type="chain" id="PRO_1000094418" description="Shikimate kinase">
    <location>
        <begin position="1"/>
        <end position="180"/>
    </location>
</feature>
<feature type="binding site" evidence="1">
    <location>
        <begin position="14"/>
        <end position="19"/>
    </location>
    <ligand>
        <name>ATP</name>
        <dbReference type="ChEBI" id="CHEBI:30616"/>
    </ligand>
</feature>
<feature type="binding site" evidence="1">
    <location>
        <position position="18"/>
    </location>
    <ligand>
        <name>Mg(2+)</name>
        <dbReference type="ChEBI" id="CHEBI:18420"/>
    </ligand>
</feature>
<feature type="binding site" evidence="1">
    <location>
        <position position="36"/>
    </location>
    <ligand>
        <name>substrate</name>
    </ligand>
</feature>
<feature type="binding site" evidence="1">
    <location>
        <position position="60"/>
    </location>
    <ligand>
        <name>substrate</name>
    </ligand>
</feature>
<feature type="binding site" evidence="1">
    <location>
        <position position="82"/>
    </location>
    <ligand>
        <name>substrate</name>
    </ligand>
</feature>
<feature type="binding site" evidence="1">
    <location>
        <position position="120"/>
    </location>
    <ligand>
        <name>ATP</name>
        <dbReference type="ChEBI" id="CHEBI:30616"/>
    </ligand>
</feature>
<feature type="binding site" evidence="1">
    <location>
        <position position="139"/>
    </location>
    <ligand>
        <name>substrate</name>
    </ligand>
</feature>
<sequence length="180" mass="19651">MNPAPNLILIGPMGAGKTCIGRRLAERFTLDFVDVDQAIVDAAGASIPTIFEHSGEAGFRSHEREALARVLEGRGQLVSTGGGAVLDPGNRALIAQRGFVVYLRVSVNAQLERLARDKGRPLLQRPDREQVLHDLAAHRDPLYRELADITLDTDPYTAADATAHLVVKLATQWQRQDLTP</sequence>
<accession>B2FQI7</accession>
<proteinExistence type="inferred from homology"/>
<protein>
    <recommendedName>
        <fullName evidence="1">Shikimate kinase</fullName>
        <shortName evidence="1">SK</shortName>
        <ecNumber evidence="1">2.7.1.71</ecNumber>
    </recommendedName>
</protein>
<reference key="1">
    <citation type="journal article" date="2008" name="Genome Biol.">
        <title>The complete genome, comparative and functional analysis of Stenotrophomonas maltophilia reveals an organism heavily shielded by drug resistance determinants.</title>
        <authorList>
            <person name="Crossman L.C."/>
            <person name="Gould V.C."/>
            <person name="Dow J.M."/>
            <person name="Vernikos G.S."/>
            <person name="Okazaki A."/>
            <person name="Sebaihia M."/>
            <person name="Saunders D."/>
            <person name="Arrowsmith C."/>
            <person name="Carver T."/>
            <person name="Peters N."/>
            <person name="Adlem E."/>
            <person name="Kerhornou A."/>
            <person name="Lord A."/>
            <person name="Murphy L."/>
            <person name="Seeger K."/>
            <person name="Squares R."/>
            <person name="Rutter S."/>
            <person name="Quail M.A."/>
            <person name="Rajandream M.A."/>
            <person name="Harris D."/>
            <person name="Churcher C."/>
            <person name="Bentley S.D."/>
            <person name="Parkhill J."/>
            <person name="Thomson N.R."/>
            <person name="Avison M.B."/>
        </authorList>
    </citation>
    <scope>NUCLEOTIDE SEQUENCE [LARGE SCALE GENOMIC DNA]</scope>
    <source>
        <strain>K279a</strain>
    </source>
</reference>